<keyword id="KW-0002">3D-structure</keyword>
<keyword id="KW-0007">Acetylation</keyword>
<keyword id="KW-0164">Citrullination</keyword>
<keyword id="KW-0963">Cytoplasm</keyword>
<keyword id="KW-0449">Lipoprotein</keyword>
<keyword id="KW-0488">Methylation</keyword>
<keyword id="KW-0539">Nucleus</keyword>
<keyword id="KW-0564">Palmitate</keyword>
<keyword id="KW-0597">Phosphoprotein</keyword>
<keyword id="KW-1185">Reference proteome</keyword>
<keyword id="KW-0687">Ribonucleoprotein</keyword>
<keyword id="KW-0689">Ribosomal protein</keyword>
<keyword id="KW-0694">RNA-binding</keyword>
<keyword id="KW-0699">rRNA-binding</keyword>
<evidence type="ECO:0000250" key="1">
    <source>
        <dbReference type="UniProtKB" id="P62280"/>
    </source>
</evidence>
<evidence type="ECO:0000250" key="2">
    <source>
        <dbReference type="UniProtKB" id="P62281"/>
    </source>
</evidence>
<evidence type="ECO:0000305" key="3"/>
<sequence>MADIQTERAYQKQPTIFQNKKRVLLGETGKEKLPRYYKNIGLGFKTPKEAIEGTYIDKKCPFTGNVSIRGRILSGVVTKMKMQRTIVIRRDYLHYIRKYNRFEKRHKNMSVHLSPCFRDVHIGDIVTVGECRPLSKTVRFNVLKVTKAAGTKKQFQKF</sequence>
<organism>
    <name type="scientific">Canis lupus familiaris</name>
    <name type="common">Dog</name>
    <name type="synonym">Canis familiaris</name>
    <dbReference type="NCBI Taxonomy" id="9615"/>
    <lineage>
        <taxon>Eukaryota</taxon>
        <taxon>Metazoa</taxon>
        <taxon>Chordata</taxon>
        <taxon>Craniata</taxon>
        <taxon>Vertebrata</taxon>
        <taxon>Euteleostomi</taxon>
        <taxon>Mammalia</taxon>
        <taxon>Eutheria</taxon>
        <taxon>Laurasiatheria</taxon>
        <taxon>Carnivora</taxon>
        <taxon>Caniformia</taxon>
        <taxon>Canidae</taxon>
        <taxon>Canis</taxon>
    </lineage>
</organism>
<feature type="initiator methionine" description="Removed" evidence="1">
    <location>
        <position position="1"/>
    </location>
</feature>
<feature type="chain" id="PRO_0000405585" description="Small ribosomal subunit protein uS17">
    <location>
        <begin position="2"/>
        <end position="158"/>
    </location>
</feature>
<feature type="modified residue" description="N-acetylalanine" evidence="1">
    <location>
        <position position="2"/>
    </location>
</feature>
<feature type="modified residue" description="Citrulline" evidence="2">
    <location>
        <position position="22"/>
    </location>
</feature>
<feature type="modified residue" description="N6-acetyllysine" evidence="1">
    <location>
        <position position="38"/>
    </location>
</feature>
<feature type="modified residue" description="N6-acetyllysine" evidence="1">
    <location>
        <position position="45"/>
    </location>
</feature>
<feature type="modified residue" description="N6-acetyllysine" evidence="2">
    <location>
        <position position="58"/>
    </location>
</feature>
<feature type="modified residue" description="Phosphoserine" evidence="1">
    <location>
        <position position="67"/>
    </location>
</feature>
<feature type="modified residue" description="Omega-N-methylarginine" evidence="2">
    <location>
        <position position="69"/>
    </location>
</feature>
<feature type="modified residue" description="Phosphoserine" evidence="1">
    <location>
        <position position="110"/>
    </location>
</feature>
<feature type="lipid moiety-binding region" description="S-palmitoyl cysteine" evidence="1">
    <location>
        <position position="60"/>
    </location>
</feature>
<comment type="function">
    <text evidence="1">Component of the small ribosomal subunit. The ribosome is a large ribonucleoprotein complex responsible for the synthesis of proteins in the cell. Part of the small subunit (SSU) processome, first precursor of the small eukaryotic ribosomal subunit. During the assembly of the SSU processome in the nucleolus, many ribosome biogenesis factors, an RNA chaperone and ribosomal proteins associate with the nascent pre-rRNA and work in concert to generate RNA folding, modifications, rearrangements and cleavage as well as targeted degradation of pre-ribosomal RNA by the RNA exosome.</text>
</comment>
<comment type="subunit">
    <text evidence="1">Component of the small ribosomal subunit. Part of the small subunit (SSU) processome, composed of more than 70 proteins and the RNA chaperone small nucleolar RNA (snoRNA) U3.</text>
</comment>
<comment type="subcellular location">
    <subcellularLocation>
        <location evidence="1">Cytoplasm</location>
    </subcellularLocation>
    <subcellularLocation>
        <location evidence="1">Nucleus</location>
        <location evidence="1">Nucleolus</location>
    </subcellularLocation>
</comment>
<comment type="PTM">
    <text evidence="2">Citrullinated by PADI4.</text>
</comment>
<comment type="similarity">
    <text evidence="3">Belongs to the universal ribosomal protein uS17 family.</text>
</comment>
<protein>
    <recommendedName>
        <fullName evidence="3">Small ribosomal subunit protein uS17</fullName>
    </recommendedName>
    <alternativeName>
        <fullName>40S ribosomal protein S11</fullName>
    </alternativeName>
</protein>
<proteinExistence type="evidence at protein level"/>
<reference key="1">
    <citation type="submission" date="2006-01" db="EMBL/GenBank/DDBJ databases">
        <title>Canis familiaris testis cDNA.</title>
        <authorList>
            <person name="Murua Escobar H."/>
            <person name="Nimzyk R."/>
            <person name="Borrmann L."/>
            <person name="Nolte I."/>
            <person name="Bullerdiek J."/>
        </authorList>
    </citation>
    <scope>NUCLEOTIDE SEQUENCE [MRNA]</scope>
    <source>
        <tissue>Testis</tissue>
    </source>
</reference>
<reference key="2">
    <citation type="journal article" date="2000" name="Anal. Biochem.">
        <title>A method for the large-scale cloning of nuclear proteins and nuclear targeting sequences on a functional basis.</title>
        <authorList>
            <person name="Pichon B."/>
            <person name="Mercan D."/>
            <person name="Pouillon V."/>
            <person name="Christophe-Hobertus C."/>
            <person name="Christophe D."/>
        </authorList>
    </citation>
    <scope>NUCLEOTIDE SEQUENCE [MRNA] OF 49-158</scope>
    <source>
        <tissue>Thyroid</tissue>
    </source>
</reference>
<reference key="3">
    <citation type="journal article" date="2008" name="Structure">
        <title>Structure of the mammalian 80S ribosome at 8.7 A resolution.</title>
        <authorList>
            <person name="Chandramouli P."/>
            <person name="Topf M."/>
            <person name="Menetret J.F."/>
            <person name="Eswar N."/>
            <person name="Cannone J.J."/>
            <person name="Gutell R.R."/>
            <person name="Sali A."/>
            <person name="Akey C.W."/>
        </authorList>
    </citation>
    <scope>STRUCTURE BY ELECTRON MICROSCOPY (8.70 ANGSTROMS)</scope>
</reference>
<gene>
    <name type="primary">RPS11</name>
</gene>
<accession>Q9XSU4</accession>
<dbReference type="EMBL" id="CX985417">
    <property type="status" value="NOT_ANNOTATED_CDS"/>
    <property type="molecule type" value="mRNA"/>
</dbReference>
<dbReference type="EMBL" id="AJ388520">
    <property type="protein sequence ID" value="CAB46822.1"/>
    <property type="molecule type" value="mRNA"/>
</dbReference>
<dbReference type="PDB" id="4V5Z">
    <property type="method" value="EM"/>
    <property type="resolution" value="8.70 A"/>
    <property type="chains" value="q=1-158"/>
</dbReference>
<dbReference type="PDBsum" id="4V5Z"/>
<dbReference type="SMR" id="Q9XSU4"/>
<dbReference type="FunCoup" id="Q9XSU4">
    <property type="interactions" value="1737"/>
</dbReference>
<dbReference type="STRING" id="9615.ENSCAFP00000033307"/>
<dbReference type="PaxDb" id="9612-ENSCAFP00000033307"/>
<dbReference type="eggNOG" id="KOG1728">
    <property type="taxonomic scope" value="Eukaryota"/>
</dbReference>
<dbReference type="InParanoid" id="Q9XSU4"/>
<dbReference type="OrthoDB" id="10254436at2759"/>
<dbReference type="Proteomes" id="UP000002254">
    <property type="component" value="Unplaced"/>
</dbReference>
<dbReference type="Proteomes" id="UP000694429">
    <property type="component" value="Unplaced"/>
</dbReference>
<dbReference type="Proteomes" id="UP000694542">
    <property type="component" value="Unplaced"/>
</dbReference>
<dbReference type="Proteomes" id="UP000805418">
    <property type="component" value="Unplaced"/>
</dbReference>
<dbReference type="GO" id="GO:0022627">
    <property type="term" value="C:cytosolic small ribosomal subunit"/>
    <property type="evidence" value="ECO:0000318"/>
    <property type="project" value="GO_Central"/>
</dbReference>
<dbReference type="GO" id="GO:0005730">
    <property type="term" value="C:nucleolus"/>
    <property type="evidence" value="ECO:0007669"/>
    <property type="project" value="UniProtKB-SubCell"/>
</dbReference>
<dbReference type="GO" id="GO:0032040">
    <property type="term" value="C:small-subunit processome"/>
    <property type="evidence" value="ECO:0000250"/>
    <property type="project" value="UniProtKB"/>
</dbReference>
<dbReference type="GO" id="GO:0019843">
    <property type="term" value="F:rRNA binding"/>
    <property type="evidence" value="ECO:0007669"/>
    <property type="project" value="UniProtKB-KW"/>
</dbReference>
<dbReference type="GO" id="GO:0003735">
    <property type="term" value="F:structural constituent of ribosome"/>
    <property type="evidence" value="ECO:0000318"/>
    <property type="project" value="GO_Central"/>
</dbReference>
<dbReference type="GO" id="GO:0042274">
    <property type="term" value="P:ribosomal small subunit biogenesis"/>
    <property type="evidence" value="ECO:0000250"/>
    <property type="project" value="UniProtKB"/>
</dbReference>
<dbReference type="GO" id="GO:0006412">
    <property type="term" value="P:translation"/>
    <property type="evidence" value="ECO:0007669"/>
    <property type="project" value="InterPro"/>
</dbReference>
<dbReference type="CDD" id="cd00364">
    <property type="entry name" value="Ribosomal_uS17"/>
    <property type="match status" value="1"/>
</dbReference>
<dbReference type="FunFam" id="2.40.50.1000:FF:000008">
    <property type="entry name" value="40S ribosomal protein S11"/>
    <property type="match status" value="1"/>
</dbReference>
<dbReference type="Gene3D" id="2.40.50.1000">
    <property type="match status" value="1"/>
</dbReference>
<dbReference type="InterPro" id="IPR012340">
    <property type="entry name" value="NA-bd_OB-fold"/>
</dbReference>
<dbReference type="InterPro" id="IPR000266">
    <property type="entry name" value="Ribosomal_uS17"/>
</dbReference>
<dbReference type="InterPro" id="IPR028333">
    <property type="entry name" value="Ribosomal_uS17_arc/euk"/>
</dbReference>
<dbReference type="InterPro" id="IPR019979">
    <property type="entry name" value="Ribosomal_uS17_CS"/>
</dbReference>
<dbReference type="InterPro" id="IPR032440">
    <property type="entry name" value="Ribosomal_uS17_N"/>
</dbReference>
<dbReference type="NCBIfam" id="NF006345">
    <property type="entry name" value="PRK08572.1"/>
    <property type="match status" value="1"/>
</dbReference>
<dbReference type="NCBIfam" id="TIGR03630">
    <property type="entry name" value="uS17_arch"/>
    <property type="match status" value="1"/>
</dbReference>
<dbReference type="PANTHER" id="PTHR10744">
    <property type="entry name" value="40S RIBOSOMAL PROTEIN S11 FAMILY MEMBER"/>
    <property type="match status" value="1"/>
</dbReference>
<dbReference type="PANTHER" id="PTHR10744:SF52">
    <property type="entry name" value="SMALL RIBOSOMAL SUBUNIT PROTEIN US17"/>
    <property type="match status" value="1"/>
</dbReference>
<dbReference type="Pfam" id="PF00366">
    <property type="entry name" value="Ribosomal_S17"/>
    <property type="match status" value="1"/>
</dbReference>
<dbReference type="Pfam" id="PF16205">
    <property type="entry name" value="Ribosomal_S17_N"/>
    <property type="match status" value="1"/>
</dbReference>
<dbReference type="PRINTS" id="PR00973">
    <property type="entry name" value="RIBOSOMALS17"/>
</dbReference>
<dbReference type="SUPFAM" id="SSF50249">
    <property type="entry name" value="Nucleic acid-binding proteins"/>
    <property type="match status" value="1"/>
</dbReference>
<dbReference type="PROSITE" id="PS00056">
    <property type="entry name" value="RIBOSOMAL_S17"/>
    <property type="match status" value="1"/>
</dbReference>
<name>RS11_CANLF</name>